<protein>
    <recommendedName>
        <fullName evidence="5">Hippocampus abundant transcript-like protein 1</fullName>
    </recommendedName>
    <alternativeName>
        <fullName evidence="1">Major facilitator superfamily domain-containing 14B</fullName>
    </alternativeName>
</protein>
<dbReference type="EMBL" id="AK146596">
    <property type="protein sequence ID" value="BAE27291.1"/>
    <property type="status" value="ALT_INIT"/>
    <property type="molecule type" value="mRNA"/>
</dbReference>
<dbReference type="EMBL" id="AC154713">
    <property type="status" value="NOT_ANNOTATED_CDS"/>
    <property type="molecule type" value="Genomic_DNA"/>
</dbReference>
<dbReference type="EMBL" id="CH466631">
    <property type="protein sequence ID" value="EDL16253.1"/>
    <property type="molecule type" value="Genomic_DNA"/>
</dbReference>
<dbReference type="EMBL" id="BC018395">
    <property type="protein sequence ID" value="AAH18395.1"/>
    <property type="status" value="ALT_INIT"/>
    <property type="molecule type" value="mRNA"/>
</dbReference>
<dbReference type="EMBL" id="BC033469">
    <property type="protein sequence ID" value="AAH33469.1"/>
    <property type="status" value="ALT_INIT"/>
    <property type="molecule type" value="mRNA"/>
</dbReference>
<dbReference type="CCDS" id="CCDS26603.2"/>
<dbReference type="RefSeq" id="NP_001077370.1">
    <property type="nucleotide sequence ID" value="NM_001083901.2"/>
</dbReference>
<dbReference type="RefSeq" id="NP_598441.3">
    <property type="nucleotide sequence ID" value="NM_133680.3"/>
</dbReference>
<dbReference type="RefSeq" id="XP_011242852.1">
    <property type="nucleotide sequence ID" value="XM_011244550.4"/>
</dbReference>
<dbReference type="SMR" id="Q8CIA9"/>
<dbReference type="BioGRID" id="211609">
    <property type="interactions" value="2"/>
</dbReference>
<dbReference type="FunCoup" id="Q8CIA9">
    <property type="interactions" value="2117"/>
</dbReference>
<dbReference type="STRING" id="10090.ENSMUSP00000118180"/>
<dbReference type="GlyCosmos" id="Q8CIA9">
    <property type="glycosylation" value="2 sites, No reported glycans"/>
</dbReference>
<dbReference type="GlyGen" id="Q8CIA9">
    <property type="glycosylation" value="2 sites"/>
</dbReference>
<dbReference type="iPTMnet" id="Q8CIA9"/>
<dbReference type="PhosphoSitePlus" id="Q8CIA9"/>
<dbReference type="PaxDb" id="10090-ENSMUSP00000118180"/>
<dbReference type="ProteomicsDB" id="295890"/>
<dbReference type="Antibodypedia" id="3023">
    <property type="antibodies" value="51 antibodies from 16 providers"/>
</dbReference>
<dbReference type="DNASU" id="66631"/>
<dbReference type="Ensembl" id="ENSMUST00000054730.10">
    <property type="protein sequence ID" value="ENSMUSP00000062566.9"/>
    <property type="gene ID" value="ENSMUSG00000038212.17"/>
</dbReference>
<dbReference type="Ensembl" id="ENSMUST00000155487.8">
    <property type="protein sequence ID" value="ENSMUSP00000118180.2"/>
    <property type="gene ID" value="ENSMUSG00000038212.17"/>
</dbReference>
<dbReference type="GeneID" id="66631"/>
<dbReference type="KEGG" id="mmu:66631"/>
<dbReference type="UCSC" id="uc007qzc.1">
    <property type="organism name" value="mouse"/>
</dbReference>
<dbReference type="AGR" id="MGI:1913881"/>
<dbReference type="CTD" id="84641"/>
<dbReference type="MGI" id="MGI:1913881">
    <property type="gene designation" value="Mfsd14b"/>
</dbReference>
<dbReference type="VEuPathDB" id="HostDB:ENSMUSG00000038212"/>
<dbReference type="eggNOG" id="KOG2816">
    <property type="taxonomic scope" value="Eukaryota"/>
</dbReference>
<dbReference type="GeneTree" id="ENSGT00940000156081"/>
<dbReference type="HOGENOM" id="CLU_001265_10_5_1"/>
<dbReference type="InParanoid" id="Q8CIA9"/>
<dbReference type="OMA" id="LELMWYG"/>
<dbReference type="OrthoDB" id="419616at2759"/>
<dbReference type="PhylomeDB" id="Q8CIA9"/>
<dbReference type="TreeFam" id="TF313511"/>
<dbReference type="BioGRID-ORCS" id="66631">
    <property type="hits" value="2 hits in 77 CRISPR screens"/>
</dbReference>
<dbReference type="ChiTaRS" id="Mfsd14b">
    <property type="organism name" value="mouse"/>
</dbReference>
<dbReference type="PRO" id="PR:Q8CIA9"/>
<dbReference type="Proteomes" id="UP000000589">
    <property type="component" value="Chromosome 13"/>
</dbReference>
<dbReference type="RNAct" id="Q8CIA9">
    <property type="molecule type" value="protein"/>
</dbReference>
<dbReference type="Bgee" id="ENSMUSG00000038212">
    <property type="expression patterns" value="Expressed in granulocyte and 252 other cell types or tissues"/>
</dbReference>
<dbReference type="GO" id="GO:0016020">
    <property type="term" value="C:membrane"/>
    <property type="evidence" value="ECO:0007669"/>
    <property type="project" value="UniProtKB-SubCell"/>
</dbReference>
<dbReference type="GO" id="GO:0022857">
    <property type="term" value="F:transmembrane transporter activity"/>
    <property type="evidence" value="ECO:0007669"/>
    <property type="project" value="InterPro"/>
</dbReference>
<dbReference type="CDD" id="cd17387">
    <property type="entry name" value="MFS_MFSD14"/>
    <property type="match status" value="1"/>
</dbReference>
<dbReference type="Gene3D" id="1.20.1250.20">
    <property type="entry name" value="MFS general substrate transporter like domains"/>
    <property type="match status" value="1"/>
</dbReference>
<dbReference type="InterPro" id="IPR011701">
    <property type="entry name" value="MFS"/>
</dbReference>
<dbReference type="InterPro" id="IPR020846">
    <property type="entry name" value="MFS_dom"/>
</dbReference>
<dbReference type="InterPro" id="IPR036259">
    <property type="entry name" value="MFS_trans_sf"/>
</dbReference>
<dbReference type="InterPro" id="IPR005829">
    <property type="entry name" value="Sugar_transporter_CS"/>
</dbReference>
<dbReference type="InterPro" id="IPR001958">
    <property type="entry name" value="Tet-R_TetA/multi-R_MdtG-like"/>
</dbReference>
<dbReference type="PANTHER" id="PTHR23504:SF32">
    <property type="entry name" value="HIPPOCAMPUS ABUNDANT TRANSCRIPT-LIKE PROTEIN 1"/>
    <property type="match status" value="1"/>
</dbReference>
<dbReference type="PANTHER" id="PTHR23504">
    <property type="entry name" value="MAJOR FACILITATOR SUPERFAMILY DOMAIN-CONTAINING PROTEIN 10"/>
    <property type="match status" value="1"/>
</dbReference>
<dbReference type="Pfam" id="PF07690">
    <property type="entry name" value="MFS_1"/>
    <property type="match status" value="1"/>
</dbReference>
<dbReference type="PRINTS" id="PR01035">
    <property type="entry name" value="TCRTETA"/>
</dbReference>
<dbReference type="SUPFAM" id="SSF103473">
    <property type="entry name" value="MFS general substrate transporter"/>
    <property type="match status" value="1"/>
</dbReference>
<dbReference type="PROSITE" id="PS50850">
    <property type="entry name" value="MFS"/>
    <property type="match status" value="1"/>
</dbReference>
<dbReference type="PROSITE" id="PS00216">
    <property type="entry name" value="SUGAR_TRANSPORT_1"/>
    <property type="match status" value="1"/>
</dbReference>
<reference key="1">
    <citation type="journal article" date="2005" name="Science">
        <title>The transcriptional landscape of the mammalian genome.</title>
        <authorList>
            <person name="Carninci P."/>
            <person name="Kasukawa T."/>
            <person name="Katayama S."/>
            <person name="Gough J."/>
            <person name="Frith M.C."/>
            <person name="Maeda N."/>
            <person name="Oyama R."/>
            <person name="Ravasi T."/>
            <person name="Lenhard B."/>
            <person name="Wells C."/>
            <person name="Kodzius R."/>
            <person name="Shimokawa K."/>
            <person name="Bajic V.B."/>
            <person name="Brenner S.E."/>
            <person name="Batalov S."/>
            <person name="Forrest A.R."/>
            <person name="Zavolan M."/>
            <person name="Davis M.J."/>
            <person name="Wilming L.G."/>
            <person name="Aidinis V."/>
            <person name="Allen J.E."/>
            <person name="Ambesi-Impiombato A."/>
            <person name="Apweiler R."/>
            <person name="Aturaliya R.N."/>
            <person name="Bailey T.L."/>
            <person name="Bansal M."/>
            <person name="Baxter L."/>
            <person name="Beisel K.W."/>
            <person name="Bersano T."/>
            <person name="Bono H."/>
            <person name="Chalk A.M."/>
            <person name="Chiu K.P."/>
            <person name="Choudhary V."/>
            <person name="Christoffels A."/>
            <person name="Clutterbuck D.R."/>
            <person name="Crowe M.L."/>
            <person name="Dalla E."/>
            <person name="Dalrymple B.P."/>
            <person name="de Bono B."/>
            <person name="Della Gatta G."/>
            <person name="di Bernardo D."/>
            <person name="Down T."/>
            <person name="Engstrom P."/>
            <person name="Fagiolini M."/>
            <person name="Faulkner G."/>
            <person name="Fletcher C.F."/>
            <person name="Fukushima T."/>
            <person name="Furuno M."/>
            <person name="Futaki S."/>
            <person name="Gariboldi M."/>
            <person name="Georgii-Hemming P."/>
            <person name="Gingeras T.R."/>
            <person name="Gojobori T."/>
            <person name="Green R.E."/>
            <person name="Gustincich S."/>
            <person name="Harbers M."/>
            <person name="Hayashi Y."/>
            <person name="Hensch T.K."/>
            <person name="Hirokawa N."/>
            <person name="Hill D."/>
            <person name="Huminiecki L."/>
            <person name="Iacono M."/>
            <person name="Ikeo K."/>
            <person name="Iwama A."/>
            <person name="Ishikawa T."/>
            <person name="Jakt M."/>
            <person name="Kanapin A."/>
            <person name="Katoh M."/>
            <person name="Kawasawa Y."/>
            <person name="Kelso J."/>
            <person name="Kitamura H."/>
            <person name="Kitano H."/>
            <person name="Kollias G."/>
            <person name="Krishnan S.P."/>
            <person name="Kruger A."/>
            <person name="Kummerfeld S.K."/>
            <person name="Kurochkin I.V."/>
            <person name="Lareau L.F."/>
            <person name="Lazarevic D."/>
            <person name="Lipovich L."/>
            <person name="Liu J."/>
            <person name="Liuni S."/>
            <person name="McWilliam S."/>
            <person name="Madan Babu M."/>
            <person name="Madera M."/>
            <person name="Marchionni L."/>
            <person name="Matsuda H."/>
            <person name="Matsuzawa S."/>
            <person name="Miki H."/>
            <person name="Mignone F."/>
            <person name="Miyake S."/>
            <person name="Morris K."/>
            <person name="Mottagui-Tabar S."/>
            <person name="Mulder N."/>
            <person name="Nakano N."/>
            <person name="Nakauchi H."/>
            <person name="Ng P."/>
            <person name="Nilsson R."/>
            <person name="Nishiguchi S."/>
            <person name="Nishikawa S."/>
            <person name="Nori F."/>
            <person name="Ohara O."/>
            <person name="Okazaki Y."/>
            <person name="Orlando V."/>
            <person name="Pang K.C."/>
            <person name="Pavan W.J."/>
            <person name="Pavesi G."/>
            <person name="Pesole G."/>
            <person name="Petrovsky N."/>
            <person name="Piazza S."/>
            <person name="Reed J."/>
            <person name="Reid J.F."/>
            <person name="Ring B.Z."/>
            <person name="Ringwald M."/>
            <person name="Rost B."/>
            <person name="Ruan Y."/>
            <person name="Salzberg S.L."/>
            <person name="Sandelin A."/>
            <person name="Schneider C."/>
            <person name="Schoenbach C."/>
            <person name="Sekiguchi K."/>
            <person name="Semple C.A."/>
            <person name="Seno S."/>
            <person name="Sessa L."/>
            <person name="Sheng Y."/>
            <person name="Shibata Y."/>
            <person name="Shimada H."/>
            <person name="Shimada K."/>
            <person name="Silva D."/>
            <person name="Sinclair B."/>
            <person name="Sperling S."/>
            <person name="Stupka E."/>
            <person name="Sugiura K."/>
            <person name="Sultana R."/>
            <person name="Takenaka Y."/>
            <person name="Taki K."/>
            <person name="Tammoja K."/>
            <person name="Tan S.L."/>
            <person name="Tang S."/>
            <person name="Taylor M.S."/>
            <person name="Tegner J."/>
            <person name="Teichmann S.A."/>
            <person name="Ueda H.R."/>
            <person name="van Nimwegen E."/>
            <person name="Verardo R."/>
            <person name="Wei C.L."/>
            <person name="Yagi K."/>
            <person name="Yamanishi H."/>
            <person name="Zabarovsky E."/>
            <person name="Zhu S."/>
            <person name="Zimmer A."/>
            <person name="Hide W."/>
            <person name="Bult C."/>
            <person name="Grimmond S.M."/>
            <person name="Teasdale R.D."/>
            <person name="Liu E.T."/>
            <person name="Brusic V."/>
            <person name="Quackenbush J."/>
            <person name="Wahlestedt C."/>
            <person name="Mattick J.S."/>
            <person name="Hume D.A."/>
            <person name="Kai C."/>
            <person name="Sasaki D."/>
            <person name="Tomaru Y."/>
            <person name="Fukuda S."/>
            <person name="Kanamori-Katayama M."/>
            <person name="Suzuki M."/>
            <person name="Aoki J."/>
            <person name="Arakawa T."/>
            <person name="Iida J."/>
            <person name="Imamura K."/>
            <person name="Itoh M."/>
            <person name="Kato T."/>
            <person name="Kawaji H."/>
            <person name="Kawagashira N."/>
            <person name="Kawashima T."/>
            <person name="Kojima M."/>
            <person name="Kondo S."/>
            <person name="Konno H."/>
            <person name="Nakano K."/>
            <person name="Ninomiya N."/>
            <person name="Nishio T."/>
            <person name="Okada M."/>
            <person name="Plessy C."/>
            <person name="Shibata K."/>
            <person name="Shiraki T."/>
            <person name="Suzuki S."/>
            <person name="Tagami M."/>
            <person name="Waki K."/>
            <person name="Watahiki A."/>
            <person name="Okamura-Oho Y."/>
            <person name="Suzuki H."/>
            <person name="Kawai J."/>
            <person name="Hayashizaki Y."/>
        </authorList>
    </citation>
    <scope>NUCLEOTIDE SEQUENCE [LARGE SCALE MRNA]</scope>
    <source>
        <strain>C57BL/6J</strain>
        <tissue>Heart</tissue>
    </source>
</reference>
<reference key="2">
    <citation type="journal article" date="2009" name="PLoS Biol.">
        <title>Lineage-specific biology revealed by a finished genome assembly of the mouse.</title>
        <authorList>
            <person name="Church D.M."/>
            <person name="Goodstadt L."/>
            <person name="Hillier L.W."/>
            <person name="Zody M.C."/>
            <person name="Goldstein S."/>
            <person name="She X."/>
            <person name="Bult C.J."/>
            <person name="Agarwala R."/>
            <person name="Cherry J.L."/>
            <person name="DiCuccio M."/>
            <person name="Hlavina W."/>
            <person name="Kapustin Y."/>
            <person name="Meric P."/>
            <person name="Maglott D."/>
            <person name="Birtle Z."/>
            <person name="Marques A.C."/>
            <person name="Graves T."/>
            <person name="Zhou S."/>
            <person name="Teague B."/>
            <person name="Potamousis K."/>
            <person name="Churas C."/>
            <person name="Place M."/>
            <person name="Herschleb J."/>
            <person name="Runnheim R."/>
            <person name="Forrest D."/>
            <person name="Amos-Landgraf J."/>
            <person name="Schwartz D.C."/>
            <person name="Cheng Z."/>
            <person name="Lindblad-Toh K."/>
            <person name="Eichler E.E."/>
            <person name="Ponting C.P."/>
        </authorList>
    </citation>
    <scope>NUCLEOTIDE SEQUENCE [LARGE SCALE GENOMIC DNA]</scope>
    <source>
        <strain>C57BL/6J</strain>
    </source>
</reference>
<reference key="3">
    <citation type="submission" date="2005-07" db="EMBL/GenBank/DDBJ databases">
        <authorList>
            <person name="Mural R.J."/>
            <person name="Adams M.D."/>
            <person name="Myers E.W."/>
            <person name="Smith H.O."/>
            <person name="Venter J.C."/>
        </authorList>
    </citation>
    <scope>NUCLEOTIDE SEQUENCE [LARGE SCALE GENOMIC DNA]</scope>
</reference>
<reference key="4">
    <citation type="journal article" date="2004" name="Genome Res.">
        <title>The status, quality, and expansion of the NIH full-length cDNA project: the Mammalian Gene Collection (MGC).</title>
        <authorList>
            <consortium name="The MGC Project Team"/>
        </authorList>
    </citation>
    <scope>NUCLEOTIDE SEQUENCE [LARGE SCALE MRNA]</scope>
    <source>
        <strain>FVB/N</strain>
        <tissue>Mammary tumor</tissue>
    </source>
</reference>
<organism>
    <name type="scientific">Mus musculus</name>
    <name type="common">Mouse</name>
    <dbReference type="NCBI Taxonomy" id="10090"/>
    <lineage>
        <taxon>Eukaryota</taxon>
        <taxon>Metazoa</taxon>
        <taxon>Chordata</taxon>
        <taxon>Craniata</taxon>
        <taxon>Vertebrata</taxon>
        <taxon>Euteleostomi</taxon>
        <taxon>Mammalia</taxon>
        <taxon>Eutheria</taxon>
        <taxon>Euarchontoglires</taxon>
        <taxon>Glires</taxon>
        <taxon>Rodentia</taxon>
        <taxon>Myomorpha</taxon>
        <taxon>Muroidea</taxon>
        <taxon>Muridae</taxon>
        <taxon>Murinae</taxon>
        <taxon>Mus</taxon>
        <taxon>Mus</taxon>
    </lineage>
</organism>
<name>MF14B_MOUSE</name>
<feature type="chain" id="PRO_0000239230" description="Hippocampus abundant transcript-like protein 1">
    <location>
        <begin position="1"/>
        <end position="507"/>
    </location>
</feature>
<feature type="topological domain" description="Extracellular" evidence="2">
    <location>
        <begin position="1"/>
        <end position="51"/>
    </location>
</feature>
<feature type="transmembrane region" description="Helical" evidence="2">
    <location>
        <begin position="52"/>
        <end position="72"/>
    </location>
</feature>
<feature type="topological domain" description="Cytoplasmic" evidence="2">
    <location>
        <begin position="73"/>
        <end position="84"/>
    </location>
</feature>
<feature type="transmembrane region" description="Helical" evidence="2">
    <location>
        <begin position="85"/>
        <end position="105"/>
    </location>
</feature>
<feature type="topological domain" description="Extracellular" evidence="2">
    <location>
        <begin position="106"/>
        <end position="113"/>
    </location>
</feature>
<feature type="transmembrane region" description="Helical" evidence="2">
    <location>
        <begin position="114"/>
        <end position="134"/>
    </location>
</feature>
<feature type="topological domain" description="Cytoplasmic" evidence="2">
    <location>
        <begin position="135"/>
        <end position="136"/>
    </location>
</feature>
<feature type="transmembrane region" description="Helical" evidence="2">
    <location>
        <begin position="137"/>
        <end position="157"/>
    </location>
</feature>
<feature type="topological domain" description="Extracellular" evidence="2">
    <location>
        <begin position="158"/>
        <end position="170"/>
    </location>
</feature>
<feature type="transmembrane region" description="Helical" evidence="2">
    <location>
        <begin position="171"/>
        <end position="191"/>
    </location>
</feature>
<feature type="topological domain" description="Cytoplasmic" evidence="2">
    <location>
        <begin position="192"/>
        <end position="198"/>
    </location>
</feature>
<feature type="transmembrane region" description="Helical" evidence="2">
    <location>
        <begin position="199"/>
        <end position="219"/>
    </location>
</feature>
<feature type="topological domain" description="Extracellular" evidence="2">
    <location>
        <begin position="220"/>
        <end position="257"/>
    </location>
</feature>
<feature type="transmembrane region" description="Helical" evidence="2">
    <location>
        <begin position="258"/>
        <end position="278"/>
    </location>
</feature>
<feature type="topological domain" description="Cytoplasmic" evidence="2">
    <location>
        <begin position="279"/>
        <end position="283"/>
    </location>
</feature>
<feature type="transmembrane region" description="Helical" evidence="2">
    <location>
        <begin position="284"/>
        <end position="304"/>
    </location>
</feature>
<feature type="topological domain" description="Extracellular" evidence="2">
    <location>
        <begin position="305"/>
        <end position="323"/>
    </location>
</feature>
<feature type="transmembrane region" description="Helical" evidence="2">
    <location>
        <begin position="324"/>
        <end position="344"/>
    </location>
</feature>
<feature type="topological domain" description="Cytoplasmic" evidence="2">
    <location>
        <begin position="345"/>
        <end position="347"/>
    </location>
</feature>
<feature type="transmembrane region" description="Helical" evidence="2">
    <location>
        <begin position="348"/>
        <end position="368"/>
    </location>
</feature>
<feature type="topological domain" description="Extracellular" evidence="2">
    <location>
        <begin position="369"/>
        <end position="389"/>
    </location>
</feature>
<feature type="transmembrane region" description="Helical" evidence="2">
    <location>
        <begin position="390"/>
        <end position="410"/>
    </location>
</feature>
<feature type="topological domain" description="Cytoplasmic" evidence="2">
    <location>
        <begin position="411"/>
        <end position="430"/>
    </location>
</feature>
<feature type="transmembrane region" description="Helical" evidence="2">
    <location>
        <begin position="431"/>
        <end position="451"/>
    </location>
</feature>
<feature type="topological domain" description="Extracellular" evidence="2">
    <location>
        <begin position="452"/>
        <end position="507"/>
    </location>
</feature>
<feature type="region of interest" description="Disordered" evidence="3">
    <location>
        <begin position="1"/>
        <end position="27"/>
    </location>
</feature>
<feature type="region of interest" description="Disordered" evidence="3">
    <location>
        <begin position="459"/>
        <end position="483"/>
    </location>
</feature>
<feature type="compositionally biased region" description="Polar residues" evidence="3">
    <location>
        <begin position="459"/>
        <end position="473"/>
    </location>
</feature>
<feature type="glycosylation site" description="N-linked (GlcNAc...) asparagine" evidence="2">
    <location>
        <position position="464"/>
    </location>
</feature>
<feature type="glycosylation site" description="N-linked (GlcNAc...) asparagine" evidence="2">
    <location>
        <position position="465"/>
    </location>
</feature>
<keyword id="KW-0325">Glycoprotein</keyword>
<keyword id="KW-0472">Membrane</keyword>
<keyword id="KW-1185">Reference proteome</keyword>
<keyword id="KW-0812">Transmembrane</keyword>
<keyword id="KW-1133">Transmembrane helix</keyword>
<keyword id="KW-0813">Transport</keyword>
<evidence type="ECO:0000250" key="1">
    <source>
        <dbReference type="UniProtKB" id="Q5SR56"/>
    </source>
</evidence>
<evidence type="ECO:0000255" key="2"/>
<evidence type="ECO:0000256" key="3">
    <source>
        <dbReference type="SAM" id="MobiDB-lite"/>
    </source>
</evidence>
<evidence type="ECO:0000305" key="4"/>
<evidence type="ECO:0000312" key="5">
    <source>
        <dbReference type="MGI" id="MGI:1913881"/>
    </source>
</evidence>
<gene>
    <name evidence="1" type="primary">Mfsd14b</name>
    <name evidence="5" type="synonym">Hiatl1</name>
</gene>
<comment type="subcellular location">
    <subcellularLocation>
        <location evidence="4">Membrane</location>
        <topology evidence="4">Multi-pass membrane protein</topology>
    </subcellularLocation>
</comment>
<comment type="similarity">
    <text evidence="4">Belongs to the major facilitator superfamily.</text>
</comment>
<comment type="sequence caution" evidence="4">
    <conflict type="erroneous initiation">
        <sequence resource="EMBL-CDS" id="AAH18395"/>
    </conflict>
</comment>
<comment type="sequence caution" evidence="4">
    <conflict type="erroneous initiation">
        <sequence resource="EMBL-CDS" id="AAH33469"/>
    </conflict>
</comment>
<comment type="sequence caution" evidence="4">
    <conflict type="erroneous initiation">
        <sequence resource="EMBL-CDS" id="BAE27291"/>
    </conflict>
</comment>
<accession>Q8CIA9</accession>
<accession>G3UVV2</accession>
<accession>Q8VCW0</accession>
<proteinExistence type="evidence at transcript level"/>
<sequence length="507" mass="55087">MSTDGESPEEPRWKAVASPKASTMPEKRGSAQAASGSWLQGFGHPSVYHAAFVIFLEFFAWGLLTTPMLTVLHETFPQHTFLMNGLIQGVKGLLSFLSAPLIGALSDVWGRKPFLLGTVFFTCFPIPLMRINPWWYFGMISVSGVFSVTFSVIFAYVADFTQEHERSTAYGWVSATFAASLVSSPAIGTYLSANYGDSLVVLVATLVALLDICFILIAVPESLSEKIRPASWGAQISWKQADPFASLKKVGKDSTVLLICITVFLSYLPEAGQYSSFFLYLRQVIGFGSVKIVAFIAMVGILSIVAQTVFLSKLMRSLGNKNTVLLGLGFQMLQLAWYGFGSQAWMMWAAGTVAAMSSITFPAVSALISRNAESDQQGVAQGIVTGIRGLCNGLGPALYGFIFYMFHVELSELGPKLNSDDDPLQGAFIPGPPFLFGACIVLMSFLVALFIPEYRKTSGVQKHNNSTSGSLSTPPERGSDEDIEPLLQDSSIWELSFEEPGNQCTEL</sequence>